<reference key="1">
    <citation type="submission" date="2006-01" db="EMBL/GenBank/DDBJ databases">
        <title>Complete sequence of Novosphingobium aromaticivorans DSM 12444.</title>
        <authorList>
            <consortium name="US DOE Joint Genome Institute"/>
            <person name="Copeland A."/>
            <person name="Lucas S."/>
            <person name="Lapidus A."/>
            <person name="Barry K."/>
            <person name="Detter J.C."/>
            <person name="Glavina T."/>
            <person name="Hammon N."/>
            <person name="Israni S."/>
            <person name="Pitluck S."/>
            <person name="Chain P."/>
            <person name="Malfatti S."/>
            <person name="Shin M."/>
            <person name="Vergez L."/>
            <person name="Schmutz J."/>
            <person name="Larimer F."/>
            <person name="Land M."/>
            <person name="Kyrpides N."/>
            <person name="Ivanova N."/>
            <person name="Fredrickson J."/>
            <person name="Balkwill D."/>
            <person name="Romine M.F."/>
            <person name="Richardson P."/>
        </authorList>
    </citation>
    <scope>NUCLEOTIDE SEQUENCE [LARGE SCALE GENOMIC DNA]</scope>
    <source>
        <strain>ATCC 700278 / DSM 12444 / CCUG 56034 / CIP 105152 / NBRC 16084 / F199</strain>
    </source>
</reference>
<keyword id="KW-0963">Cytoplasm</keyword>
<keyword id="KW-0227">DNA damage</keyword>
<keyword id="KW-0233">DNA recombination</keyword>
<keyword id="KW-0234">DNA repair</keyword>
<keyword id="KW-0238">DNA-binding</keyword>
<keyword id="KW-1185">Reference proteome</keyword>
<dbReference type="EMBL" id="CP000248">
    <property type="protein sequence ID" value="ABD24870.1"/>
    <property type="molecule type" value="Genomic_DNA"/>
</dbReference>
<dbReference type="RefSeq" id="WP_011444084.1">
    <property type="nucleotide sequence ID" value="NC_007794.1"/>
</dbReference>
<dbReference type="SMR" id="Q2GBA3"/>
<dbReference type="STRING" id="279238.Saro_0422"/>
<dbReference type="KEGG" id="nar:Saro_0422"/>
<dbReference type="eggNOG" id="COG0632">
    <property type="taxonomic scope" value="Bacteria"/>
</dbReference>
<dbReference type="HOGENOM" id="CLU_087936_3_0_5"/>
<dbReference type="Proteomes" id="UP000009134">
    <property type="component" value="Chromosome"/>
</dbReference>
<dbReference type="GO" id="GO:0005737">
    <property type="term" value="C:cytoplasm"/>
    <property type="evidence" value="ECO:0007669"/>
    <property type="project" value="UniProtKB-SubCell"/>
</dbReference>
<dbReference type="GO" id="GO:0009379">
    <property type="term" value="C:Holliday junction helicase complex"/>
    <property type="evidence" value="ECO:0007669"/>
    <property type="project" value="InterPro"/>
</dbReference>
<dbReference type="GO" id="GO:0048476">
    <property type="term" value="C:Holliday junction resolvase complex"/>
    <property type="evidence" value="ECO:0007669"/>
    <property type="project" value="UniProtKB-UniRule"/>
</dbReference>
<dbReference type="GO" id="GO:0005524">
    <property type="term" value="F:ATP binding"/>
    <property type="evidence" value="ECO:0007669"/>
    <property type="project" value="InterPro"/>
</dbReference>
<dbReference type="GO" id="GO:0000400">
    <property type="term" value="F:four-way junction DNA binding"/>
    <property type="evidence" value="ECO:0007669"/>
    <property type="project" value="UniProtKB-UniRule"/>
</dbReference>
<dbReference type="GO" id="GO:0009378">
    <property type="term" value="F:four-way junction helicase activity"/>
    <property type="evidence" value="ECO:0007669"/>
    <property type="project" value="InterPro"/>
</dbReference>
<dbReference type="GO" id="GO:0006310">
    <property type="term" value="P:DNA recombination"/>
    <property type="evidence" value="ECO:0007669"/>
    <property type="project" value="UniProtKB-UniRule"/>
</dbReference>
<dbReference type="GO" id="GO:0006281">
    <property type="term" value="P:DNA repair"/>
    <property type="evidence" value="ECO:0007669"/>
    <property type="project" value="UniProtKB-UniRule"/>
</dbReference>
<dbReference type="Gene3D" id="1.10.150.20">
    <property type="entry name" value="5' to 3' exonuclease, C-terminal subdomain"/>
    <property type="match status" value="1"/>
</dbReference>
<dbReference type="Gene3D" id="1.10.8.10">
    <property type="entry name" value="DNA helicase RuvA subunit, C-terminal domain"/>
    <property type="match status" value="1"/>
</dbReference>
<dbReference type="Gene3D" id="2.40.50.140">
    <property type="entry name" value="Nucleic acid-binding proteins"/>
    <property type="match status" value="1"/>
</dbReference>
<dbReference type="HAMAP" id="MF_00031">
    <property type="entry name" value="DNA_HJ_migration_RuvA"/>
    <property type="match status" value="1"/>
</dbReference>
<dbReference type="InterPro" id="IPR013849">
    <property type="entry name" value="DNA_helicase_Holl-junc_RuvA_I"/>
</dbReference>
<dbReference type="InterPro" id="IPR003583">
    <property type="entry name" value="Hlx-hairpin-Hlx_DNA-bd_motif"/>
</dbReference>
<dbReference type="InterPro" id="IPR012340">
    <property type="entry name" value="NA-bd_OB-fold"/>
</dbReference>
<dbReference type="InterPro" id="IPR000085">
    <property type="entry name" value="RuvA"/>
</dbReference>
<dbReference type="InterPro" id="IPR010994">
    <property type="entry name" value="RuvA_2-like"/>
</dbReference>
<dbReference type="InterPro" id="IPR011114">
    <property type="entry name" value="RuvA_C"/>
</dbReference>
<dbReference type="InterPro" id="IPR036267">
    <property type="entry name" value="RuvA_C_sf"/>
</dbReference>
<dbReference type="NCBIfam" id="TIGR00084">
    <property type="entry name" value="ruvA"/>
    <property type="match status" value="1"/>
</dbReference>
<dbReference type="Pfam" id="PF14520">
    <property type="entry name" value="HHH_5"/>
    <property type="match status" value="1"/>
</dbReference>
<dbReference type="Pfam" id="PF07499">
    <property type="entry name" value="RuvA_C"/>
    <property type="match status" value="1"/>
</dbReference>
<dbReference type="Pfam" id="PF01330">
    <property type="entry name" value="RuvA_N"/>
    <property type="match status" value="1"/>
</dbReference>
<dbReference type="SMART" id="SM00278">
    <property type="entry name" value="HhH1"/>
    <property type="match status" value="2"/>
</dbReference>
<dbReference type="SUPFAM" id="SSF46929">
    <property type="entry name" value="DNA helicase RuvA subunit, C-terminal domain"/>
    <property type="match status" value="1"/>
</dbReference>
<dbReference type="SUPFAM" id="SSF50249">
    <property type="entry name" value="Nucleic acid-binding proteins"/>
    <property type="match status" value="1"/>
</dbReference>
<dbReference type="SUPFAM" id="SSF47781">
    <property type="entry name" value="RuvA domain 2-like"/>
    <property type="match status" value="1"/>
</dbReference>
<comment type="function">
    <text evidence="1">The RuvA-RuvB-RuvC complex processes Holliday junction (HJ) DNA during genetic recombination and DNA repair, while the RuvA-RuvB complex plays an important role in the rescue of blocked DNA replication forks via replication fork reversal (RFR). RuvA specifically binds to HJ cruciform DNA, conferring on it an open structure. The RuvB hexamer acts as an ATP-dependent pump, pulling dsDNA into and through the RuvAB complex. HJ branch migration allows RuvC to scan DNA until it finds its consensus sequence, where it cleaves and resolves the cruciform DNA.</text>
</comment>
<comment type="subunit">
    <text evidence="1">Homotetramer. Forms an RuvA(8)-RuvB(12)-Holliday junction (HJ) complex. HJ DNA is sandwiched between 2 RuvA tetramers; dsDNA enters through RuvA and exits via RuvB. An RuvB hexamer assembles on each DNA strand where it exits the tetramer. Each RuvB hexamer is contacted by two RuvA subunits (via domain III) on 2 adjacent RuvB subunits; this complex drives branch migration. In the full resolvosome a probable DNA-RuvA(4)-RuvB(12)-RuvC(2) complex forms which resolves the HJ.</text>
</comment>
<comment type="subcellular location">
    <subcellularLocation>
        <location evidence="1">Cytoplasm</location>
    </subcellularLocation>
</comment>
<comment type="domain">
    <text evidence="1">Has three domains with a flexible linker between the domains II and III and assumes an 'L' shape. Domain III is highly mobile and contacts RuvB.</text>
</comment>
<comment type="similarity">
    <text evidence="1">Belongs to the RuvA family.</text>
</comment>
<accession>Q2GBA3</accession>
<gene>
    <name evidence="1" type="primary">ruvA</name>
    <name type="ordered locus">Saro_0422</name>
</gene>
<sequence length="204" mass="20750">MIAKLTGILDDTGPDWAVIDVNGVGYLVHCSAKTLTHLGLRGDKVVVHTEMQVSETDQRLIGFTSAGERAWFRLLTAVQGVGSKVALAILSALSVEELQRACAHGDSAMVARANGVGPKLASRIVNELKDKAGGLAGYASPVGPGGEAFVAPPGNASADAVSALQNLGFKPAVASSAVAAAVKELGEDAGLNDLVRVALKRAAG</sequence>
<organism>
    <name type="scientific">Novosphingobium aromaticivorans (strain ATCC 700278 / DSM 12444 / CCUG 56034 / CIP 105152 / NBRC 16084 / F199)</name>
    <dbReference type="NCBI Taxonomy" id="279238"/>
    <lineage>
        <taxon>Bacteria</taxon>
        <taxon>Pseudomonadati</taxon>
        <taxon>Pseudomonadota</taxon>
        <taxon>Alphaproteobacteria</taxon>
        <taxon>Sphingomonadales</taxon>
        <taxon>Sphingomonadaceae</taxon>
        <taxon>Novosphingobium</taxon>
    </lineage>
</organism>
<name>RUVA_NOVAD</name>
<protein>
    <recommendedName>
        <fullName evidence="1">Holliday junction branch migration complex subunit RuvA</fullName>
    </recommendedName>
</protein>
<feature type="chain" id="PRO_1000002502" description="Holliday junction branch migration complex subunit RuvA">
    <location>
        <begin position="1"/>
        <end position="204"/>
    </location>
</feature>
<feature type="region of interest" description="Domain I" evidence="1">
    <location>
        <begin position="1"/>
        <end position="64"/>
    </location>
</feature>
<feature type="region of interest" description="Domain II" evidence="1">
    <location>
        <begin position="65"/>
        <end position="143"/>
    </location>
</feature>
<feature type="region of interest" description="Flexible linker" evidence="1">
    <location>
        <begin position="144"/>
        <end position="154"/>
    </location>
</feature>
<feature type="region of interest" description="Domain III" evidence="1">
    <location>
        <begin position="154"/>
        <end position="204"/>
    </location>
</feature>
<evidence type="ECO:0000255" key="1">
    <source>
        <dbReference type="HAMAP-Rule" id="MF_00031"/>
    </source>
</evidence>
<proteinExistence type="inferred from homology"/>